<reference key="1">
    <citation type="submission" date="2003-01" db="EMBL/GenBank/DDBJ databases">
        <authorList>
            <consortium name="NIH - Xenopus Gene Collection (XGC) project"/>
        </authorList>
    </citation>
    <scope>NUCLEOTIDE SEQUENCE [LARGE SCALE MRNA]</scope>
    <source>
        <tissue>Embryo</tissue>
    </source>
</reference>
<accession>Q7ZXH7</accession>
<proteinExistence type="evidence at transcript level"/>
<dbReference type="EC" id="3.6.5.2" evidence="2"/>
<dbReference type="EMBL" id="BC044988">
    <property type="protein sequence ID" value="AAH44988.1"/>
    <property type="molecule type" value="mRNA"/>
</dbReference>
<dbReference type="RefSeq" id="NP_001080191.1">
    <property type="nucleotide sequence ID" value="NM_001086722.1"/>
</dbReference>
<dbReference type="SMR" id="Q7ZXH7"/>
<dbReference type="BioGRID" id="98125">
    <property type="interactions" value="2"/>
</dbReference>
<dbReference type="DNASU" id="379883"/>
<dbReference type="GeneID" id="379883"/>
<dbReference type="KEGG" id="xla:108713157"/>
<dbReference type="KEGG" id="xla:379883"/>
<dbReference type="AGR" id="Xenbase:XB-GENE-479040"/>
<dbReference type="CTD" id="108713157"/>
<dbReference type="CTD" id="379883"/>
<dbReference type="Xenbase" id="XB-GENE-479040">
    <property type="gene designation" value="rap1b.L"/>
</dbReference>
<dbReference type="OMA" id="MPLREFK"/>
<dbReference type="OrthoDB" id="5976022at2759"/>
<dbReference type="Proteomes" id="UP000186698">
    <property type="component" value="Chromosome 3L"/>
</dbReference>
<dbReference type="Proteomes" id="UP000186698">
    <property type="component" value="Chromosome 3S"/>
</dbReference>
<dbReference type="Bgee" id="108713157">
    <property type="expression patterns" value="Expressed in spleen and 19 other cell types or tissues"/>
</dbReference>
<dbReference type="GO" id="GO:0070161">
    <property type="term" value="C:anchoring junction"/>
    <property type="evidence" value="ECO:0007669"/>
    <property type="project" value="UniProtKB-SubCell"/>
</dbReference>
<dbReference type="GO" id="GO:0005829">
    <property type="term" value="C:cytosol"/>
    <property type="evidence" value="ECO:0007669"/>
    <property type="project" value="UniProtKB-SubCell"/>
</dbReference>
<dbReference type="GO" id="GO:0005886">
    <property type="term" value="C:plasma membrane"/>
    <property type="evidence" value="ECO:0000318"/>
    <property type="project" value="GO_Central"/>
</dbReference>
<dbReference type="GO" id="GO:0003925">
    <property type="term" value="F:G protein activity"/>
    <property type="evidence" value="ECO:0007669"/>
    <property type="project" value="UniProtKB-EC"/>
</dbReference>
<dbReference type="GO" id="GO:0019003">
    <property type="term" value="F:GDP binding"/>
    <property type="evidence" value="ECO:0000318"/>
    <property type="project" value="GO_Central"/>
</dbReference>
<dbReference type="GO" id="GO:0005525">
    <property type="term" value="F:GTP binding"/>
    <property type="evidence" value="ECO:0000318"/>
    <property type="project" value="GO_Central"/>
</dbReference>
<dbReference type="GO" id="GO:0003924">
    <property type="term" value="F:GTPase activity"/>
    <property type="evidence" value="ECO:0000318"/>
    <property type="project" value="GO_Central"/>
</dbReference>
<dbReference type="GO" id="GO:0071320">
    <property type="term" value="P:cellular response to cAMP"/>
    <property type="evidence" value="ECO:0000318"/>
    <property type="project" value="GO_Central"/>
</dbReference>
<dbReference type="GO" id="GO:2000301">
    <property type="term" value="P:negative regulation of synaptic vesicle exocytosis"/>
    <property type="evidence" value="ECO:0000318"/>
    <property type="project" value="GO_Central"/>
</dbReference>
<dbReference type="GO" id="GO:0032486">
    <property type="term" value="P:Rap protein signal transduction"/>
    <property type="evidence" value="ECO:0000318"/>
    <property type="project" value="GO_Central"/>
</dbReference>
<dbReference type="CDD" id="cd04175">
    <property type="entry name" value="Rap1"/>
    <property type="match status" value="1"/>
</dbReference>
<dbReference type="FunFam" id="3.40.50.300:FF:000182">
    <property type="entry name" value="ras-related protein Rap-1b"/>
    <property type="match status" value="1"/>
</dbReference>
<dbReference type="Gene3D" id="3.40.50.300">
    <property type="entry name" value="P-loop containing nucleotide triphosphate hydrolases"/>
    <property type="match status" value="1"/>
</dbReference>
<dbReference type="InterPro" id="IPR027417">
    <property type="entry name" value="P-loop_NTPase"/>
</dbReference>
<dbReference type="InterPro" id="IPR038851">
    <property type="entry name" value="Rap1"/>
</dbReference>
<dbReference type="InterPro" id="IPR005225">
    <property type="entry name" value="Small_GTP-bd"/>
</dbReference>
<dbReference type="InterPro" id="IPR001806">
    <property type="entry name" value="Small_GTPase"/>
</dbReference>
<dbReference type="InterPro" id="IPR020849">
    <property type="entry name" value="Small_GTPase_Ras-type"/>
</dbReference>
<dbReference type="NCBIfam" id="TIGR00231">
    <property type="entry name" value="small_GTP"/>
    <property type="match status" value="1"/>
</dbReference>
<dbReference type="PANTHER" id="PTHR24070">
    <property type="entry name" value="RAS, DI-RAS, AND RHEB FAMILY MEMBERS OF SMALL GTPASE SUPERFAMILY"/>
    <property type="match status" value="1"/>
</dbReference>
<dbReference type="Pfam" id="PF00071">
    <property type="entry name" value="Ras"/>
    <property type="match status" value="1"/>
</dbReference>
<dbReference type="PRINTS" id="PR00449">
    <property type="entry name" value="RASTRNSFRMNG"/>
</dbReference>
<dbReference type="SMART" id="SM00175">
    <property type="entry name" value="RAB"/>
    <property type="match status" value="1"/>
</dbReference>
<dbReference type="SMART" id="SM00176">
    <property type="entry name" value="RAN"/>
    <property type="match status" value="1"/>
</dbReference>
<dbReference type="SMART" id="SM00173">
    <property type="entry name" value="RAS"/>
    <property type="match status" value="1"/>
</dbReference>
<dbReference type="SMART" id="SM00174">
    <property type="entry name" value="RHO"/>
    <property type="match status" value="1"/>
</dbReference>
<dbReference type="SUPFAM" id="SSF52540">
    <property type="entry name" value="P-loop containing nucleoside triphosphate hydrolases"/>
    <property type="match status" value="1"/>
</dbReference>
<dbReference type="PROSITE" id="PS51421">
    <property type="entry name" value="RAS"/>
    <property type="match status" value="1"/>
</dbReference>
<evidence type="ECO:0000250" key="1"/>
<evidence type="ECO:0000250" key="2">
    <source>
        <dbReference type="UniProtKB" id="P61224"/>
    </source>
</evidence>
<evidence type="ECO:0000305" key="3"/>
<organism>
    <name type="scientific">Xenopus laevis</name>
    <name type="common">African clawed frog</name>
    <dbReference type="NCBI Taxonomy" id="8355"/>
    <lineage>
        <taxon>Eukaryota</taxon>
        <taxon>Metazoa</taxon>
        <taxon>Chordata</taxon>
        <taxon>Craniata</taxon>
        <taxon>Vertebrata</taxon>
        <taxon>Euteleostomi</taxon>
        <taxon>Amphibia</taxon>
        <taxon>Batrachia</taxon>
        <taxon>Anura</taxon>
        <taxon>Pipoidea</taxon>
        <taxon>Pipidae</taxon>
        <taxon>Xenopodinae</taxon>
        <taxon>Xenopus</taxon>
        <taxon>Xenopus</taxon>
    </lineage>
</organism>
<sequence length="184" mass="20834">MREYKLVVLGSGGVGKSALTVQFVQGIFVEKYDPTIEDSYRKQVEVDGQQCMLEILDTAGTEQFTAMRDLYMKNGQGFALVYSITAQSTFNDLQDLREQILRVKDTDDVPMILVGNKCDLEDERVVGKEQGQNLARQWNNCAFLESSAKSKINVNEIFYDLVRQINRKTPVPGKARKKSTCHLL</sequence>
<feature type="chain" id="PRO_0000366915" description="Ras-related protein Rap-1b">
    <location>
        <begin position="1"/>
        <end position="181"/>
    </location>
</feature>
<feature type="propeptide" id="PRO_0000366916" description="Removed in mature form" evidence="1">
    <location>
        <begin position="182"/>
        <end position="184"/>
    </location>
</feature>
<feature type="short sequence motif" description="Effector region" evidence="3">
    <location>
        <begin position="32"/>
        <end position="40"/>
    </location>
</feature>
<feature type="binding site" evidence="1">
    <location>
        <begin position="10"/>
        <end position="17"/>
    </location>
    <ligand>
        <name>GTP</name>
        <dbReference type="ChEBI" id="CHEBI:37565"/>
    </ligand>
</feature>
<feature type="binding site" evidence="1">
    <location>
        <begin position="57"/>
        <end position="61"/>
    </location>
    <ligand>
        <name>GTP</name>
        <dbReference type="ChEBI" id="CHEBI:37565"/>
    </ligand>
</feature>
<feature type="binding site" evidence="1">
    <location>
        <begin position="116"/>
        <end position="119"/>
    </location>
    <ligand>
        <name>GTP</name>
        <dbReference type="ChEBI" id="CHEBI:37565"/>
    </ligand>
</feature>
<feature type="modified residue" description="Cysteine methyl ester" evidence="1">
    <location>
        <position position="181"/>
    </location>
</feature>
<feature type="lipid moiety-binding region" description="S-geranylgeranyl cysteine" evidence="1">
    <location>
        <position position="181"/>
    </location>
</feature>
<comment type="function">
    <text evidence="1">Probable GTP-binding protein that possesses GTPase activity. May play a role in endothelial cell polarity and endothelial barrier function (By similarity).</text>
</comment>
<comment type="catalytic activity">
    <reaction evidence="2">
        <text>GTP + H2O = GDP + phosphate + H(+)</text>
        <dbReference type="Rhea" id="RHEA:19669"/>
        <dbReference type="ChEBI" id="CHEBI:15377"/>
        <dbReference type="ChEBI" id="CHEBI:15378"/>
        <dbReference type="ChEBI" id="CHEBI:37565"/>
        <dbReference type="ChEBI" id="CHEBI:43474"/>
        <dbReference type="ChEBI" id="CHEBI:58189"/>
        <dbReference type="EC" id="3.6.5.2"/>
    </reaction>
</comment>
<comment type="subcellular location">
    <subcellularLocation>
        <location evidence="1">Cell membrane</location>
    </subcellularLocation>
    <subcellularLocation>
        <location evidence="1">Cytoplasm</location>
        <location evidence="1">Cytosol</location>
    </subcellularLocation>
    <subcellularLocation>
        <location evidence="1">Cell junction</location>
    </subcellularLocation>
    <text evidence="1">May shuttle between plasma membrane and cytosol.</text>
</comment>
<comment type="similarity">
    <text evidence="3">Belongs to the small GTPase superfamily. Ras family.</text>
</comment>
<name>RAP1B_XENLA</name>
<keyword id="KW-0965">Cell junction</keyword>
<keyword id="KW-1003">Cell membrane</keyword>
<keyword id="KW-0963">Cytoplasm</keyword>
<keyword id="KW-0342">GTP-binding</keyword>
<keyword id="KW-0378">Hydrolase</keyword>
<keyword id="KW-0449">Lipoprotein</keyword>
<keyword id="KW-0472">Membrane</keyword>
<keyword id="KW-0488">Methylation</keyword>
<keyword id="KW-0547">Nucleotide-binding</keyword>
<keyword id="KW-0636">Prenylation</keyword>
<keyword id="KW-1185">Reference proteome</keyword>
<gene>
    <name type="primary">rap1b</name>
</gene>
<protein>
    <recommendedName>
        <fullName>Ras-related protein Rap-1b</fullName>
        <ecNumber evidence="2">3.6.5.2</ecNumber>
    </recommendedName>
</protein>